<accession>Q3JC91</accession>
<name>ARGC_NITOC</name>
<reference key="1">
    <citation type="journal article" date="2006" name="Appl. Environ. Microbiol.">
        <title>Complete genome sequence of the marine, chemolithoautotrophic, ammonia-oxidizing bacterium Nitrosococcus oceani ATCC 19707.</title>
        <authorList>
            <person name="Klotz M.G."/>
            <person name="Arp D.J."/>
            <person name="Chain P.S.G."/>
            <person name="El-Sheikh A.F."/>
            <person name="Hauser L.J."/>
            <person name="Hommes N.G."/>
            <person name="Larimer F.W."/>
            <person name="Malfatti S.A."/>
            <person name="Norton J.M."/>
            <person name="Poret-Peterson A.T."/>
            <person name="Vergez L.M."/>
            <person name="Ward B.B."/>
        </authorList>
    </citation>
    <scope>NUCLEOTIDE SEQUENCE [LARGE SCALE GENOMIC DNA]</scope>
    <source>
        <strain>ATCC 19707 / BCRC 17464 / JCM 30415 / NCIMB 11848 / C-107</strain>
    </source>
</reference>
<evidence type="ECO:0000255" key="1">
    <source>
        <dbReference type="HAMAP-Rule" id="MF_00150"/>
    </source>
</evidence>
<comment type="function">
    <text evidence="1">Catalyzes the NADPH-dependent reduction of N-acetyl-5-glutamyl phosphate to yield N-acetyl-L-glutamate 5-semialdehyde.</text>
</comment>
<comment type="catalytic activity">
    <reaction evidence="1">
        <text>N-acetyl-L-glutamate 5-semialdehyde + phosphate + NADP(+) = N-acetyl-L-glutamyl 5-phosphate + NADPH + H(+)</text>
        <dbReference type="Rhea" id="RHEA:21588"/>
        <dbReference type="ChEBI" id="CHEBI:15378"/>
        <dbReference type="ChEBI" id="CHEBI:29123"/>
        <dbReference type="ChEBI" id="CHEBI:43474"/>
        <dbReference type="ChEBI" id="CHEBI:57783"/>
        <dbReference type="ChEBI" id="CHEBI:57936"/>
        <dbReference type="ChEBI" id="CHEBI:58349"/>
        <dbReference type="EC" id="1.2.1.38"/>
    </reaction>
</comment>
<comment type="pathway">
    <text evidence="1">Amino-acid biosynthesis; L-arginine biosynthesis; N(2)-acetyl-L-ornithine from L-glutamate: step 3/4.</text>
</comment>
<comment type="subcellular location">
    <subcellularLocation>
        <location evidence="1">Cytoplasm</location>
    </subcellularLocation>
</comment>
<comment type="similarity">
    <text evidence="1">Belongs to the NAGSA dehydrogenase family. Type 1 subfamily.</text>
</comment>
<feature type="chain" id="PRO_1000011026" description="N-acetyl-gamma-glutamyl-phosphate reductase">
    <location>
        <begin position="1"/>
        <end position="343"/>
    </location>
</feature>
<feature type="active site" evidence="1">
    <location>
        <position position="150"/>
    </location>
</feature>
<organism>
    <name type="scientific">Nitrosococcus oceani (strain ATCC 19707 / BCRC 17464 / JCM 30415 / NCIMB 11848 / C-107)</name>
    <dbReference type="NCBI Taxonomy" id="323261"/>
    <lineage>
        <taxon>Bacteria</taxon>
        <taxon>Pseudomonadati</taxon>
        <taxon>Pseudomonadota</taxon>
        <taxon>Gammaproteobacteria</taxon>
        <taxon>Chromatiales</taxon>
        <taxon>Chromatiaceae</taxon>
        <taxon>Nitrosococcus</taxon>
    </lineage>
</organism>
<protein>
    <recommendedName>
        <fullName evidence="1">N-acetyl-gamma-glutamyl-phosphate reductase</fullName>
        <shortName evidence="1">AGPR</shortName>
        <ecNumber evidence="1">1.2.1.38</ecNumber>
    </recommendedName>
    <alternativeName>
        <fullName evidence="1">N-acetyl-glutamate semialdehyde dehydrogenase</fullName>
        <shortName evidence="1">NAGSA dehydrogenase</shortName>
    </alternativeName>
</protein>
<gene>
    <name evidence="1" type="primary">argC</name>
    <name type="ordered locus">Noc_1047</name>
</gene>
<sequence>MIRAAIVGGTGYTGVELLRLLANHPNVEIVAITSRTEAGRPVSKLFPNLRGYLDICFTEPEPAQLAAECDVVFFATPHGVAMDMVPALLAQNTRVIDLSADFRLADPTIWEQWYGRPHAAPHLLAEAVYGLPEINREAIRQARLIACPGCYPTAVQLGFLPLLEHQLVDPSRLIADAKSGASGAGRKAALGTLLCEAGENFKAYSVSGHRHLPEIIQGLQWASRSSVDLTFVPHLIPMIRGIHATLYAQLEHEVDLQELYEQRYAPEPFVDVLPPGSHPETRSVRGNNMCRLAIHRPSAGNTVIVLSVTDNLIKGASGQAIQNMNLMFGQEETRGLMHIAVIP</sequence>
<keyword id="KW-0028">Amino-acid biosynthesis</keyword>
<keyword id="KW-0055">Arginine biosynthesis</keyword>
<keyword id="KW-0963">Cytoplasm</keyword>
<keyword id="KW-0521">NADP</keyword>
<keyword id="KW-0560">Oxidoreductase</keyword>
<keyword id="KW-1185">Reference proteome</keyword>
<dbReference type="EC" id="1.2.1.38" evidence="1"/>
<dbReference type="EMBL" id="CP000127">
    <property type="protein sequence ID" value="ABA57555.1"/>
    <property type="molecule type" value="Genomic_DNA"/>
</dbReference>
<dbReference type="RefSeq" id="WP_002810861.1">
    <property type="nucleotide sequence ID" value="NC_007484.1"/>
</dbReference>
<dbReference type="SMR" id="Q3JC91"/>
<dbReference type="FunCoup" id="Q3JC91">
    <property type="interactions" value="332"/>
</dbReference>
<dbReference type="STRING" id="323261.Noc_1047"/>
<dbReference type="KEGG" id="noc:Noc_1047"/>
<dbReference type="eggNOG" id="COG0002">
    <property type="taxonomic scope" value="Bacteria"/>
</dbReference>
<dbReference type="HOGENOM" id="CLU_006384_0_1_6"/>
<dbReference type="InParanoid" id="Q3JC91"/>
<dbReference type="UniPathway" id="UPA00068">
    <property type="reaction ID" value="UER00108"/>
</dbReference>
<dbReference type="Proteomes" id="UP000006838">
    <property type="component" value="Chromosome"/>
</dbReference>
<dbReference type="GO" id="GO:0005737">
    <property type="term" value="C:cytoplasm"/>
    <property type="evidence" value="ECO:0007669"/>
    <property type="project" value="UniProtKB-SubCell"/>
</dbReference>
<dbReference type="GO" id="GO:0003942">
    <property type="term" value="F:N-acetyl-gamma-glutamyl-phosphate reductase activity"/>
    <property type="evidence" value="ECO:0007669"/>
    <property type="project" value="UniProtKB-UniRule"/>
</dbReference>
<dbReference type="GO" id="GO:0051287">
    <property type="term" value="F:NAD binding"/>
    <property type="evidence" value="ECO:0007669"/>
    <property type="project" value="InterPro"/>
</dbReference>
<dbReference type="GO" id="GO:0070401">
    <property type="term" value="F:NADP+ binding"/>
    <property type="evidence" value="ECO:0007669"/>
    <property type="project" value="InterPro"/>
</dbReference>
<dbReference type="GO" id="GO:0006526">
    <property type="term" value="P:L-arginine biosynthetic process"/>
    <property type="evidence" value="ECO:0007669"/>
    <property type="project" value="UniProtKB-UniRule"/>
</dbReference>
<dbReference type="CDD" id="cd23934">
    <property type="entry name" value="AGPR_1_C"/>
    <property type="match status" value="1"/>
</dbReference>
<dbReference type="CDD" id="cd17895">
    <property type="entry name" value="AGPR_1_N"/>
    <property type="match status" value="1"/>
</dbReference>
<dbReference type="FunFam" id="3.30.360.10:FF:000014">
    <property type="entry name" value="N-acetyl-gamma-glutamyl-phosphate reductase"/>
    <property type="match status" value="1"/>
</dbReference>
<dbReference type="Gene3D" id="3.30.360.10">
    <property type="entry name" value="Dihydrodipicolinate Reductase, domain 2"/>
    <property type="match status" value="1"/>
</dbReference>
<dbReference type="Gene3D" id="3.40.50.720">
    <property type="entry name" value="NAD(P)-binding Rossmann-like Domain"/>
    <property type="match status" value="1"/>
</dbReference>
<dbReference type="HAMAP" id="MF_00150">
    <property type="entry name" value="ArgC_type1"/>
    <property type="match status" value="1"/>
</dbReference>
<dbReference type="InterPro" id="IPR023013">
    <property type="entry name" value="AGPR_AS"/>
</dbReference>
<dbReference type="InterPro" id="IPR000706">
    <property type="entry name" value="AGPR_type-1"/>
</dbReference>
<dbReference type="InterPro" id="IPR036291">
    <property type="entry name" value="NAD(P)-bd_dom_sf"/>
</dbReference>
<dbReference type="InterPro" id="IPR050085">
    <property type="entry name" value="NAGSA_dehydrogenase"/>
</dbReference>
<dbReference type="InterPro" id="IPR000534">
    <property type="entry name" value="Semialdehyde_DH_NAD-bd"/>
</dbReference>
<dbReference type="NCBIfam" id="TIGR01850">
    <property type="entry name" value="argC"/>
    <property type="match status" value="1"/>
</dbReference>
<dbReference type="PANTHER" id="PTHR32338:SF10">
    <property type="entry name" value="N-ACETYL-GAMMA-GLUTAMYL-PHOSPHATE REDUCTASE, CHLOROPLASTIC-RELATED"/>
    <property type="match status" value="1"/>
</dbReference>
<dbReference type="PANTHER" id="PTHR32338">
    <property type="entry name" value="N-ACETYL-GAMMA-GLUTAMYL-PHOSPHATE REDUCTASE, CHLOROPLASTIC-RELATED-RELATED"/>
    <property type="match status" value="1"/>
</dbReference>
<dbReference type="Pfam" id="PF01118">
    <property type="entry name" value="Semialdhyde_dh"/>
    <property type="match status" value="1"/>
</dbReference>
<dbReference type="Pfam" id="PF22698">
    <property type="entry name" value="Semialdhyde_dhC_1"/>
    <property type="match status" value="1"/>
</dbReference>
<dbReference type="SMART" id="SM00859">
    <property type="entry name" value="Semialdhyde_dh"/>
    <property type="match status" value="1"/>
</dbReference>
<dbReference type="SUPFAM" id="SSF55347">
    <property type="entry name" value="Glyceraldehyde-3-phosphate dehydrogenase-like, C-terminal domain"/>
    <property type="match status" value="1"/>
</dbReference>
<dbReference type="SUPFAM" id="SSF51735">
    <property type="entry name" value="NAD(P)-binding Rossmann-fold domains"/>
    <property type="match status" value="1"/>
</dbReference>
<dbReference type="PROSITE" id="PS01224">
    <property type="entry name" value="ARGC"/>
    <property type="match status" value="1"/>
</dbReference>
<proteinExistence type="inferred from homology"/>